<dbReference type="EMBL" id="AM295250">
    <property type="protein sequence ID" value="CAL28628.1"/>
    <property type="molecule type" value="Genomic_DNA"/>
</dbReference>
<dbReference type="RefSeq" id="WP_015900966.1">
    <property type="nucleotide sequence ID" value="NC_012121.1"/>
</dbReference>
<dbReference type="SMR" id="B9DM34"/>
<dbReference type="KEGG" id="sca:SCA_1722"/>
<dbReference type="eggNOG" id="COG0199">
    <property type="taxonomic scope" value="Bacteria"/>
</dbReference>
<dbReference type="HOGENOM" id="CLU_139869_3_0_9"/>
<dbReference type="OrthoDB" id="9810484at2"/>
<dbReference type="BioCyc" id="SCAR396513:SCA_RS08775-MONOMER"/>
<dbReference type="Proteomes" id="UP000000444">
    <property type="component" value="Chromosome"/>
</dbReference>
<dbReference type="GO" id="GO:0015935">
    <property type="term" value="C:small ribosomal subunit"/>
    <property type="evidence" value="ECO:0007669"/>
    <property type="project" value="TreeGrafter"/>
</dbReference>
<dbReference type="GO" id="GO:0019843">
    <property type="term" value="F:rRNA binding"/>
    <property type="evidence" value="ECO:0007669"/>
    <property type="project" value="UniProtKB-UniRule"/>
</dbReference>
<dbReference type="GO" id="GO:0003735">
    <property type="term" value="F:structural constituent of ribosome"/>
    <property type="evidence" value="ECO:0007669"/>
    <property type="project" value="InterPro"/>
</dbReference>
<dbReference type="GO" id="GO:0008270">
    <property type="term" value="F:zinc ion binding"/>
    <property type="evidence" value="ECO:0007669"/>
    <property type="project" value="UniProtKB-UniRule"/>
</dbReference>
<dbReference type="GO" id="GO:0006412">
    <property type="term" value="P:translation"/>
    <property type="evidence" value="ECO:0007669"/>
    <property type="project" value="UniProtKB-UniRule"/>
</dbReference>
<dbReference type="FunFam" id="4.10.830.10:FF:000001">
    <property type="entry name" value="30S ribosomal protein S14 type Z"/>
    <property type="match status" value="1"/>
</dbReference>
<dbReference type="Gene3D" id="4.10.830.10">
    <property type="entry name" value="30s Ribosomal Protein S14, Chain N"/>
    <property type="match status" value="1"/>
</dbReference>
<dbReference type="HAMAP" id="MF_01364_B">
    <property type="entry name" value="Ribosomal_uS14_2_B"/>
    <property type="match status" value="1"/>
</dbReference>
<dbReference type="InterPro" id="IPR001209">
    <property type="entry name" value="Ribosomal_uS14"/>
</dbReference>
<dbReference type="InterPro" id="IPR023053">
    <property type="entry name" value="Ribosomal_uS14_bact"/>
</dbReference>
<dbReference type="InterPro" id="IPR018271">
    <property type="entry name" value="Ribosomal_uS14_CS"/>
</dbReference>
<dbReference type="InterPro" id="IPR043140">
    <property type="entry name" value="Ribosomal_uS14_sf"/>
</dbReference>
<dbReference type="NCBIfam" id="NF005974">
    <property type="entry name" value="PRK08061.1"/>
    <property type="match status" value="1"/>
</dbReference>
<dbReference type="PANTHER" id="PTHR19836">
    <property type="entry name" value="30S RIBOSOMAL PROTEIN S14"/>
    <property type="match status" value="1"/>
</dbReference>
<dbReference type="PANTHER" id="PTHR19836:SF26">
    <property type="entry name" value="SMALL RIBOSOMAL SUBUNIT PROTEIN US14B"/>
    <property type="match status" value="1"/>
</dbReference>
<dbReference type="Pfam" id="PF00253">
    <property type="entry name" value="Ribosomal_S14"/>
    <property type="match status" value="1"/>
</dbReference>
<dbReference type="SUPFAM" id="SSF57716">
    <property type="entry name" value="Glucocorticoid receptor-like (DNA-binding domain)"/>
    <property type="match status" value="1"/>
</dbReference>
<dbReference type="PROSITE" id="PS00527">
    <property type="entry name" value="RIBOSOMAL_S14"/>
    <property type="match status" value="1"/>
</dbReference>
<organism>
    <name type="scientific">Staphylococcus carnosus (strain TM300)</name>
    <dbReference type="NCBI Taxonomy" id="396513"/>
    <lineage>
        <taxon>Bacteria</taxon>
        <taxon>Bacillati</taxon>
        <taxon>Bacillota</taxon>
        <taxon>Bacilli</taxon>
        <taxon>Bacillales</taxon>
        <taxon>Staphylococcaceae</taxon>
        <taxon>Staphylococcus</taxon>
    </lineage>
</organism>
<sequence>MAKKSMVVKSSKKQKFPVREYTRCERCGRPHSVYRKFKLCRICFRELAYKGQIPGVRKASW</sequence>
<reference key="1">
    <citation type="journal article" date="2009" name="Appl. Environ. Microbiol.">
        <title>Genome analysis of the meat starter culture bacterium Staphylococcus carnosus TM300.</title>
        <authorList>
            <person name="Rosenstein R."/>
            <person name="Nerz C."/>
            <person name="Biswas L."/>
            <person name="Resch A."/>
            <person name="Raddatz G."/>
            <person name="Schuster S.C."/>
            <person name="Goetz F."/>
        </authorList>
    </citation>
    <scope>NUCLEOTIDE SEQUENCE [LARGE SCALE GENOMIC DNA]</scope>
    <source>
        <strain>TM300</strain>
    </source>
</reference>
<protein>
    <recommendedName>
        <fullName evidence="1">Small ribosomal subunit protein uS14</fullName>
    </recommendedName>
    <alternativeName>
        <fullName evidence="2">30S ribosomal protein S14 type Z</fullName>
    </alternativeName>
</protein>
<name>RS14Z_STACT</name>
<comment type="function">
    <text evidence="1">Binds 16S rRNA, required for the assembly of 30S particles and may also be responsible for determining the conformation of the 16S rRNA at the A site.</text>
</comment>
<comment type="cofactor">
    <cofactor evidence="1">
        <name>Zn(2+)</name>
        <dbReference type="ChEBI" id="CHEBI:29105"/>
    </cofactor>
    <text evidence="1">Binds 1 zinc ion per subunit.</text>
</comment>
<comment type="subunit">
    <text evidence="1">Part of the 30S ribosomal subunit. Contacts proteins S3 and S10.</text>
</comment>
<comment type="similarity">
    <text evidence="1">Belongs to the universal ribosomal protein uS14 family. Zinc-binding uS14 subfamily.</text>
</comment>
<accession>B9DM34</accession>
<proteinExistence type="inferred from homology"/>
<feature type="chain" id="PRO_1000166779" description="Small ribosomal subunit protein uS14">
    <location>
        <begin position="1"/>
        <end position="61"/>
    </location>
</feature>
<feature type="binding site" evidence="1">
    <location>
        <position position="24"/>
    </location>
    <ligand>
        <name>Zn(2+)</name>
        <dbReference type="ChEBI" id="CHEBI:29105"/>
    </ligand>
</feature>
<feature type="binding site" evidence="1">
    <location>
        <position position="27"/>
    </location>
    <ligand>
        <name>Zn(2+)</name>
        <dbReference type="ChEBI" id="CHEBI:29105"/>
    </ligand>
</feature>
<feature type="binding site" evidence="1">
    <location>
        <position position="40"/>
    </location>
    <ligand>
        <name>Zn(2+)</name>
        <dbReference type="ChEBI" id="CHEBI:29105"/>
    </ligand>
</feature>
<feature type="binding site" evidence="1">
    <location>
        <position position="43"/>
    </location>
    <ligand>
        <name>Zn(2+)</name>
        <dbReference type="ChEBI" id="CHEBI:29105"/>
    </ligand>
</feature>
<gene>
    <name evidence="1" type="primary">rpsZ</name>
    <name evidence="1" type="synonym">rpsN</name>
    <name type="ordered locus">Sca_1722</name>
</gene>
<keyword id="KW-0479">Metal-binding</keyword>
<keyword id="KW-1185">Reference proteome</keyword>
<keyword id="KW-0687">Ribonucleoprotein</keyword>
<keyword id="KW-0689">Ribosomal protein</keyword>
<keyword id="KW-0694">RNA-binding</keyword>
<keyword id="KW-0699">rRNA-binding</keyword>
<keyword id="KW-0862">Zinc</keyword>
<evidence type="ECO:0000255" key="1">
    <source>
        <dbReference type="HAMAP-Rule" id="MF_01364"/>
    </source>
</evidence>
<evidence type="ECO:0000305" key="2"/>